<protein>
    <recommendedName>
        <fullName evidence="3">Mannitol-specific phosphotransferase enzyme IIA component</fullName>
    </recommendedName>
    <alternativeName>
        <fullName evidence="3">EIIA</fullName>
    </alternativeName>
    <alternativeName>
        <fullName evidence="3">EIII</fullName>
    </alternativeName>
    <alternativeName>
        <fullName evidence="3">PTS system mannitol-specific EIIA component</fullName>
    </alternativeName>
</protein>
<proteinExistence type="inferred from homology"/>
<accession>Q6GER9</accession>
<reference key="1">
    <citation type="journal article" date="2004" name="Proc. Natl. Acad. Sci. U.S.A.">
        <title>Complete genomes of two clinical Staphylococcus aureus strains: evidence for the rapid evolution of virulence and drug resistance.</title>
        <authorList>
            <person name="Holden M.T.G."/>
            <person name="Feil E.J."/>
            <person name="Lindsay J.A."/>
            <person name="Peacock S.J."/>
            <person name="Day N.P.J."/>
            <person name="Enright M.C."/>
            <person name="Foster T.J."/>
            <person name="Moore C.E."/>
            <person name="Hurst L."/>
            <person name="Atkin R."/>
            <person name="Barron A."/>
            <person name="Bason N."/>
            <person name="Bentley S.D."/>
            <person name="Chillingworth C."/>
            <person name="Chillingworth T."/>
            <person name="Churcher C."/>
            <person name="Clark L."/>
            <person name="Corton C."/>
            <person name="Cronin A."/>
            <person name="Doggett J."/>
            <person name="Dowd L."/>
            <person name="Feltwell T."/>
            <person name="Hance Z."/>
            <person name="Harris B."/>
            <person name="Hauser H."/>
            <person name="Holroyd S."/>
            <person name="Jagels K."/>
            <person name="James K.D."/>
            <person name="Lennard N."/>
            <person name="Line A."/>
            <person name="Mayes R."/>
            <person name="Moule S."/>
            <person name="Mungall K."/>
            <person name="Ormond D."/>
            <person name="Quail M.A."/>
            <person name="Rabbinowitsch E."/>
            <person name="Rutherford K.M."/>
            <person name="Sanders M."/>
            <person name="Sharp S."/>
            <person name="Simmonds M."/>
            <person name="Stevens K."/>
            <person name="Whitehead S."/>
            <person name="Barrell B.G."/>
            <person name="Spratt B.G."/>
            <person name="Parkhill J."/>
        </authorList>
    </citation>
    <scope>NUCLEOTIDE SEQUENCE [LARGE SCALE GENOMIC DNA]</scope>
    <source>
        <strain>MRSA252</strain>
    </source>
</reference>
<organism>
    <name type="scientific">Staphylococcus aureus (strain MRSA252)</name>
    <dbReference type="NCBI Taxonomy" id="282458"/>
    <lineage>
        <taxon>Bacteria</taxon>
        <taxon>Bacillati</taxon>
        <taxon>Bacillota</taxon>
        <taxon>Bacilli</taxon>
        <taxon>Bacillales</taxon>
        <taxon>Staphylococcaceae</taxon>
        <taxon>Staphylococcus</taxon>
    </lineage>
</organism>
<dbReference type="EMBL" id="BX571856">
    <property type="protein sequence ID" value="CAG41227.1"/>
    <property type="molecule type" value="Genomic_DNA"/>
</dbReference>
<dbReference type="RefSeq" id="WP_001292150.1">
    <property type="nucleotide sequence ID" value="NC_002952.2"/>
</dbReference>
<dbReference type="SMR" id="Q6GER9"/>
<dbReference type="KEGG" id="sar:SAR2246"/>
<dbReference type="HOGENOM" id="CLU_072531_3_0_9"/>
<dbReference type="Proteomes" id="UP000000596">
    <property type="component" value="Chromosome"/>
</dbReference>
<dbReference type="GO" id="GO:0005737">
    <property type="term" value="C:cytoplasm"/>
    <property type="evidence" value="ECO:0007669"/>
    <property type="project" value="UniProtKB-SubCell"/>
</dbReference>
<dbReference type="GO" id="GO:0005886">
    <property type="term" value="C:plasma membrane"/>
    <property type="evidence" value="ECO:0007669"/>
    <property type="project" value="TreeGrafter"/>
</dbReference>
<dbReference type="GO" id="GO:0016301">
    <property type="term" value="F:kinase activity"/>
    <property type="evidence" value="ECO:0007669"/>
    <property type="project" value="UniProtKB-KW"/>
</dbReference>
<dbReference type="GO" id="GO:0090563">
    <property type="term" value="F:protein-phosphocysteine-sugar phosphotransferase activity"/>
    <property type="evidence" value="ECO:0007669"/>
    <property type="project" value="TreeGrafter"/>
</dbReference>
<dbReference type="GO" id="GO:0009401">
    <property type="term" value="P:phosphoenolpyruvate-dependent sugar phosphotransferase system"/>
    <property type="evidence" value="ECO:0007669"/>
    <property type="project" value="UniProtKB-KW"/>
</dbReference>
<dbReference type="CDD" id="cd00211">
    <property type="entry name" value="PTS_IIA_fru"/>
    <property type="match status" value="1"/>
</dbReference>
<dbReference type="Gene3D" id="3.40.930.10">
    <property type="entry name" value="Mannitol-specific EII, Chain A"/>
    <property type="match status" value="1"/>
</dbReference>
<dbReference type="InterPro" id="IPR016152">
    <property type="entry name" value="PTrfase/Anion_transptr"/>
</dbReference>
<dbReference type="InterPro" id="IPR002178">
    <property type="entry name" value="PTS_EIIA_type-2_dom"/>
</dbReference>
<dbReference type="InterPro" id="IPR050893">
    <property type="entry name" value="Sugar_PTS"/>
</dbReference>
<dbReference type="PANTHER" id="PTHR30181">
    <property type="entry name" value="MANNITOL PERMEASE IIC COMPONENT"/>
    <property type="match status" value="1"/>
</dbReference>
<dbReference type="PANTHER" id="PTHR30181:SF2">
    <property type="entry name" value="PTS SYSTEM MANNITOL-SPECIFIC EIICBA COMPONENT"/>
    <property type="match status" value="1"/>
</dbReference>
<dbReference type="Pfam" id="PF00359">
    <property type="entry name" value="PTS_EIIA_2"/>
    <property type="match status" value="1"/>
</dbReference>
<dbReference type="SUPFAM" id="SSF55804">
    <property type="entry name" value="Phoshotransferase/anion transport protein"/>
    <property type="match status" value="1"/>
</dbReference>
<dbReference type="PROSITE" id="PS51094">
    <property type="entry name" value="PTS_EIIA_TYPE_2"/>
    <property type="match status" value="1"/>
</dbReference>
<dbReference type="PROSITE" id="PS00372">
    <property type="entry name" value="PTS_EIIA_TYPE_2_HIS"/>
    <property type="match status" value="1"/>
</dbReference>
<comment type="function">
    <text evidence="3">The phosphoenolpyruvate-dependent sugar phosphotransferase system (sugar PTS), a major carbohydrate active transport system, catalyzes the phosphorylation of incoming sugar substrates concomitantly with their translocation across the cell membrane. The enzyme II CmtAB PTS system is involved in D-mannitol transport.</text>
</comment>
<comment type="subunit">
    <text evidence="3">Homodimer or homotrimer. Seems to be a monomer when not phosphorylated.</text>
</comment>
<comment type="subcellular location">
    <subcellularLocation>
        <location evidence="5">Cytoplasm</location>
    </subcellularLocation>
</comment>
<comment type="domain">
    <text evidence="4">The PTS EIIA type-2 domain is phosphorylated by phospho-HPr on a histidyl residue. Then, it transfers the phosphoryl group to the PTS EIIB type-2 domain.</text>
</comment>
<name>PTMA_STAAR</name>
<sequence>MSELFSNDNIFLNVNVNSQNEAIEKAGKALVDSGAVTDAYIQAMKDREQVVSTFMGNGLAIPHGTDEAKTNVIHSGLTLLQIPEGVDWDGEVVKVVVGIAGKDGEHLDLLSKIAITFSEEGNVDRIVQAKSAEEIKQVFEEADA</sequence>
<keyword id="KW-0963">Cytoplasm</keyword>
<keyword id="KW-0418">Kinase</keyword>
<keyword id="KW-0597">Phosphoprotein</keyword>
<keyword id="KW-0598">Phosphotransferase system</keyword>
<keyword id="KW-0762">Sugar transport</keyword>
<keyword id="KW-0808">Transferase</keyword>
<keyword id="KW-0813">Transport</keyword>
<feature type="initiator methionine" description="Removed" evidence="1">
    <location>
        <position position="1"/>
    </location>
</feature>
<feature type="chain" id="PRO_0000186639" description="Mannitol-specific phosphotransferase enzyme IIA component">
    <location>
        <begin position="2"/>
        <end position="144"/>
    </location>
</feature>
<feature type="domain" description="PTS EIIA type-2" evidence="4">
    <location>
        <begin position="3"/>
        <end position="142"/>
    </location>
</feature>
<feature type="active site" description="Tele-phosphohistidine intermediate" evidence="3 4">
    <location>
        <position position="63"/>
    </location>
</feature>
<feature type="modified residue" description="Phosphohistidine; by HPr" evidence="2 3">
    <location>
        <position position="63"/>
    </location>
</feature>
<evidence type="ECO:0000250" key="1"/>
<evidence type="ECO:0000250" key="2">
    <source>
        <dbReference type="UniProtKB" id="P00550"/>
    </source>
</evidence>
<evidence type="ECO:0000250" key="3">
    <source>
        <dbReference type="UniProtKB" id="P0A0E0"/>
    </source>
</evidence>
<evidence type="ECO:0000255" key="4">
    <source>
        <dbReference type="PROSITE-ProRule" id="PRU00417"/>
    </source>
</evidence>
<evidence type="ECO:0000305" key="5"/>
<gene>
    <name type="primary">mtlF</name>
    <name type="synonym">mtlA</name>
    <name type="ordered locus">SAR2246</name>
</gene>